<dbReference type="EMBL" id="Z93102">
    <property type="protein sequence ID" value="CAB07526.1"/>
    <property type="molecule type" value="Genomic_DNA"/>
</dbReference>
<dbReference type="EMBL" id="AL009126">
    <property type="protein sequence ID" value="CAB12717.1"/>
    <property type="molecule type" value="Genomic_DNA"/>
</dbReference>
<dbReference type="PIR" id="B69817">
    <property type="entry name" value="B69817"/>
</dbReference>
<dbReference type="RefSeq" id="NP_388769.1">
    <property type="nucleotide sequence ID" value="NC_000964.3"/>
</dbReference>
<dbReference type="RefSeq" id="WP_003245008.1">
    <property type="nucleotide sequence ID" value="NZ_OZ025638.1"/>
</dbReference>
<dbReference type="FunCoup" id="P97029">
    <property type="interactions" value="33"/>
</dbReference>
<dbReference type="STRING" id="224308.BSU08890"/>
<dbReference type="PaxDb" id="224308-BSU08890"/>
<dbReference type="EnsemblBacteria" id="CAB12717">
    <property type="protein sequence ID" value="CAB12717"/>
    <property type="gene ID" value="BSU_08890"/>
</dbReference>
<dbReference type="GeneID" id="939244"/>
<dbReference type="KEGG" id="bsu:BSU08890"/>
<dbReference type="PATRIC" id="fig|224308.179.peg.959"/>
<dbReference type="eggNOG" id="ENOG5033MFH">
    <property type="taxonomic scope" value="Bacteria"/>
</dbReference>
<dbReference type="InParanoid" id="P97029"/>
<dbReference type="OrthoDB" id="2988123at2"/>
<dbReference type="BioCyc" id="BSUB:BSU08890-MONOMER"/>
<dbReference type="Proteomes" id="UP000001570">
    <property type="component" value="Chromosome"/>
</dbReference>
<dbReference type="GO" id="GO:0005886">
    <property type="term" value="C:plasma membrane"/>
    <property type="evidence" value="ECO:0007669"/>
    <property type="project" value="UniProtKB-SubCell"/>
</dbReference>
<dbReference type="PROSITE" id="PS51257">
    <property type="entry name" value="PROKAR_LIPOPROTEIN"/>
    <property type="match status" value="1"/>
</dbReference>
<evidence type="ECO:0000255" key="1"/>
<evidence type="ECO:0000255" key="2">
    <source>
        <dbReference type="PROSITE-ProRule" id="PRU00303"/>
    </source>
</evidence>
<evidence type="ECO:0000305" key="3"/>
<gene>
    <name type="primary">ygaO</name>
    <name type="ordered locus">BSU08890</name>
</gene>
<proteinExistence type="inferred from homology"/>
<protein>
    <recommendedName>
        <fullName>Uncharacterized lipoprotein YgaO</fullName>
    </recommendedName>
</protein>
<feature type="signal peptide" evidence="2">
    <location>
        <begin position="1"/>
        <end position="17"/>
    </location>
</feature>
<feature type="chain" id="PRO_0000013700" description="Uncharacterized lipoprotein YgaO">
    <location>
        <begin position="18"/>
        <end position="157"/>
    </location>
</feature>
<feature type="transmembrane region" description="Helical" evidence="1">
    <location>
        <begin position="42"/>
        <end position="64"/>
    </location>
</feature>
<feature type="transmembrane region" description="Helical" evidence="1">
    <location>
        <begin position="98"/>
        <end position="120"/>
    </location>
</feature>
<feature type="transmembrane region" description="Helical" evidence="1">
    <location>
        <begin position="124"/>
        <end position="146"/>
    </location>
</feature>
<feature type="lipid moiety-binding region" description="N-palmitoyl cysteine" evidence="2">
    <location>
        <position position="18"/>
    </location>
</feature>
<feature type="lipid moiety-binding region" description="S-diacylglycerol cysteine" evidence="2">
    <location>
        <position position="18"/>
    </location>
</feature>
<comment type="subcellular location">
    <subcellularLocation>
        <location evidence="2">Cell membrane</location>
        <topology evidence="3">Multi-pass membrane protein</topology>
    </subcellularLocation>
</comment>
<organism>
    <name type="scientific">Bacillus subtilis (strain 168)</name>
    <dbReference type="NCBI Taxonomy" id="224308"/>
    <lineage>
        <taxon>Bacteria</taxon>
        <taxon>Bacillati</taxon>
        <taxon>Bacillota</taxon>
        <taxon>Bacilli</taxon>
        <taxon>Bacillales</taxon>
        <taxon>Bacillaceae</taxon>
        <taxon>Bacillus</taxon>
    </lineage>
</organism>
<accession>P97029</accession>
<keyword id="KW-1003">Cell membrane</keyword>
<keyword id="KW-0449">Lipoprotein</keyword>
<keyword id="KW-0472">Membrane</keyword>
<keyword id="KW-0564">Palmitate</keyword>
<keyword id="KW-1185">Reference proteome</keyword>
<keyword id="KW-0732">Signal</keyword>
<keyword id="KW-0812">Transmembrane</keyword>
<keyword id="KW-1133">Transmembrane helix</keyword>
<sequence length="157" mass="17773">MSMKTKAAFHLVLFGLACWALISYFEASEGIASFFGTKSGGMVFDLNLTPFILFVAASAVYLYLQKKSRPARKQLLLPDEFEEQDEREQMMTAKACRASYIAVYFSLPAAAVLLIFYPLFQSRIPFFPIIIVFIIMIIQHLSYVISFKKNEKNSGAL</sequence>
<reference key="1">
    <citation type="submission" date="1997-03" db="EMBL/GenBank/DDBJ databases">
        <authorList>
            <person name="Cummings N.J."/>
            <person name="Ruiz-Teran F."/>
            <person name="Connerton I.F."/>
        </authorList>
    </citation>
    <scope>NUCLEOTIDE SEQUENCE [GENOMIC DNA]</scope>
    <source>
        <strain>168</strain>
    </source>
</reference>
<reference key="2">
    <citation type="journal article" date="1997" name="Nature">
        <title>The complete genome sequence of the Gram-positive bacterium Bacillus subtilis.</title>
        <authorList>
            <person name="Kunst F."/>
            <person name="Ogasawara N."/>
            <person name="Moszer I."/>
            <person name="Albertini A.M."/>
            <person name="Alloni G."/>
            <person name="Azevedo V."/>
            <person name="Bertero M.G."/>
            <person name="Bessieres P."/>
            <person name="Bolotin A."/>
            <person name="Borchert S."/>
            <person name="Borriss R."/>
            <person name="Boursier L."/>
            <person name="Brans A."/>
            <person name="Braun M."/>
            <person name="Brignell S.C."/>
            <person name="Bron S."/>
            <person name="Brouillet S."/>
            <person name="Bruschi C.V."/>
            <person name="Caldwell B."/>
            <person name="Capuano V."/>
            <person name="Carter N.M."/>
            <person name="Choi S.-K."/>
            <person name="Codani J.-J."/>
            <person name="Connerton I.F."/>
            <person name="Cummings N.J."/>
            <person name="Daniel R.A."/>
            <person name="Denizot F."/>
            <person name="Devine K.M."/>
            <person name="Duesterhoeft A."/>
            <person name="Ehrlich S.D."/>
            <person name="Emmerson P.T."/>
            <person name="Entian K.-D."/>
            <person name="Errington J."/>
            <person name="Fabret C."/>
            <person name="Ferrari E."/>
            <person name="Foulger D."/>
            <person name="Fritz C."/>
            <person name="Fujita M."/>
            <person name="Fujita Y."/>
            <person name="Fuma S."/>
            <person name="Galizzi A."/>
            <person name="Galleron N."/>
            <person name="Ghim S.-Y."/>
            <person name="Glaser P."/>
            <person name="Goffeau A."/>
            <person name="Golightly E.J."/>
            <person name="Grandi G."/>
            <person name="Guiseppi G."/>
            <person name="Guy B.J."/>
            <person name="Haga K."/>
            <person name="Haiech J."/>
            <person name="Harwood C.R."/>
            <person name="Henaut A."/>
            <person name="Hilbert H."/>
            <person name="Holsappel S."/>
            <person name="Hosono S."/>
            <person name="Hullo M.-F."/>
            <person name="Itaya M."/>
            <person name="Jones L.-M."/>
            <person name="Joris B."/>
            <person name="Karamata D."/>
            <person name="Kasahara Y."/>
            <person name="Klaerr-Blanchard M."/>
            <person name="Klein C."/>
            <person name="Kobayashi Y."/>
            <person name="Koetter P."/>
            <person name="Koningstein G."/>
            <person name="Krogh S."/>
            <person name="Kumano M."/>
            <person name="Kurita K."/>
            <person name="Lapidus A."/>
            <person name="Lardinois S."/>
            <person name="Lauber J."/>
            <person name="Lazarevic V."/>
            <person name="Lee S.-M."/>
            <person name="Levine A."/>
            <person name="Liu H."/>
            <person name="Masuda S."/>
            <person name="Mauel C."/>
            <person name="Medigue C."/>
            <person name="Medina N."/>
            <person name="Mellado R.P."/>
            <person name="Mizuno M."/>
            <person name="Moestl D."/>
            <person name="Nakai S."/>
            <person name="Noback M."/>
            <person name="Noone D."/>
            <person name="O'Reilly M."/>
            <person name="Ogawa K."/>
            <person name="Ogiwara A."/>
            <person name="Oudega B."/>
            <person name="Park S.-H."/>
            <person name="Parro V."/>
            <person name="Pohl T.M."/>
            <person name="Portetelle D."/>
            <person name="Porwollik S."/>
            <person name="Prescott A.M."/>
            <person name="Presecan E."/>
            <person name="Pujic P."/>
            <person name="Purnelle B."/>
            <person name="Rapoport G."/>
            <person name="Rey M."/>
            <person name="Reynolds S."/>
            <person name="Rieger M."/>
            <person name="Rivolta C."/>
            <person name="Rocha E."/>
            <person name="Roche B."/>
            <person name="Rose M."/>
            <person name="Sadaie Y."/>
            <person name="Sato T."/>
            <person name="Scanlan E."/>
            <person name="Schleich S."/>
            <person name="Schroeter R."/>
            <person name="Scoffone F."/>
            <person name="Sekiguchi J."/>
            <person name="Sekowska A."/>
            <person name="Seror S.J."/>
            <person name="Serror P."/>
            <person name="Shin B.-S."/>
            <person name="Soldo B."/>
            <person name="Sorokin A."/>
            <person name="Tacconi E."/>
            <person name="Takagi T."/>
            <person name="Takahashi H."/>
            <person name="Takemaru K."/>
            <person name="Takeuchi M."/>
            <person name="Tamakoshi A."/>
            <person name="Tanaka T."/>
            <person name="Terpstra P."/>
            <person name="Tognoni A."/>
            <person name="Tosato V."/>
            <person name="Uchiyama S."/>
            <person name="Vandenbol M."/>
            <person name="Vannier F."/>
            <person name="Vassarotti A."/>
            <person name="Viari A."/>
            <person name="Wambutt R."/>
            <person name="Wedler E."/>
            <person name="Wedler H."/>
            <person name="Weitzenegger T."/>
            <person name="Winters P."/>
            <person name="Wipat A."/>
            <person name="Yamamoto H."/>
            <person name="Yamane K."/>
            <person name="Yasumoto K."/>
            <person name="Yata K."/>
            <person name="Yoshida K."/>
            <person name="Yoshikawa H.-F."/>
            <person name="Zumstein E."/>
            <person name="Yoshikawa H."/>
            <person name="Danchin A."/>
        </authorList>
    </citation>
    <scope>NUCLEOTIDE SEQUENCE [LARGE SCALE GENOMIC DNA]</scope>
    <source>
        <strain>168</strain>
    </source>
</reference>
<name>YGAO_BACSU</name>